<name>TA2A_TETAF</name>
<keyword id="KW-0027">Amidation</keyword>
<keyword id="KW-0929">Antimicrobial</keyword>
<keyword id="KW-0964">Secreted</keyword>
<keyword id="KW-0732">Signal</keyword>
<keyword id="KW-0800">Toxin</keyword>
<organism>
    <name type="scientific">Tetramorium africanum</name>
    <name type="common">Fierce ant</name>
    <name type="synonym">Macromischa africana</name>
    <dbReference type="NCBI Taxonomy" id="628533"/>
    <lineage>
        <taxon>Eukaryota</taxon>
        <taxon>Metazoa</taxon>
        <taxon>Ecdysozoa</taxon>
        <taxon>Arthropoda</taxon>
        <taxon>Hexapoda</taxon>
        <taxon>Insecta</taxon>
        <taxon>Pterygota</taxon>
        <taxon>Neoptera</taxon>
        <taxon>Endopterygota</taxon>
        <taxon>Hymenoptera</taxon>
        <taxon>Apocrita</taxon>
        <taxon>Aculeata</taxon>
        <taxon>Formicoidea</taxon>
        <taxon>Formicidae</taxon>
        <taxon>Myrmicinae</taxon>
        <taxon>Tetramorium</taxon>
    </lineage>
</organism>
<evidence type="ECO:0000250" key="1">
    <source>
        <dbReference type="UniProtKB" id="W8GNV3"/>
    </source>
</evidence>
<evidence type="ECO:0000255" key="2"/>
<evidence type="ECO:0000269" key="3">
    <source>
    </source>
</evidence>
<evidence type="ECO:0000303" key="4">
    <source>
    </source>
</evidence>
<evidence type="ECO:0000305" key="5"/>
<evidence type="ECO:0000305" key="6">
    <source>
    </source>
</evidence>
<evidence type="ECO:0000312" key="7">
    <source>
        <dbReference type="EMBL" id="CAH2618699.1"/>
    </source>
</evidence>
<comment type="function">
    <text evidence="1 3">Peptide with toxicity towards insects that may also act as antimicrobial peptide (By similarity) (PubMed:37221205). Causes calcium influx in F11 cells (EC(50)=5.8 nM), possibly by modulating sodium channels (Nav). In vivo, is lethal to insects, but does not show toxicity to vertebrates. Intraplantar injection into mice does not induce spontaneous nocifensive behaviors up to a dose of 200 pmol (PubMed:37221205).</text>
</comment>
<comment type="subcellular location">
    <subcellularLocation>
        <location evidence="3">Secreted</location>
    </subcellularLocation>
</comment>
<comment type="tissue specificity">
    <text evidence="6">Expressed by the venom gland.</text>
</comment>
<comment type="toxic dose">
    <text evidence="3">PD(50) (measured at 1 hour) is 7.1 nmol/g by intrathoracic injection into blowflies (Lucilia caesar). Is lethal by intrathoracic injection to blowfiles at the dose tested (57 nmol/g).</text>
</comment>
<comment type="similarity">
    <text evidence="5">Belongs to the formicidae venom precursor-01 superfamily.</text>
</comment>
<accession>P0DX60</accession>
<sequence length="78" mass="7950">MKLSFLSLALAIIFVTVLIYAPQAEAKALADAVADADADADAAADAVADALADADAFKIPWGKIKDFVTGGIKEVAKG</sequence>
<reference key="1">
    <citation type="journal article" date="2023" name="Nat. Commun.">
        <title>Ant venoms contain vertebrate-selective pain-causing sodium channel toxins.</title>
        <authorList>
            <person name="Robinson S.D."/>
            <person name="Deuis J.R."/>
            <person name="Touchard A."/>
            <person name="Keramidas A."/>
            <person name="Mueller A."/>
            <person name="Schroeder C.I."/>
            <person name="Barasse V."/>
            <person name="Walker A.A."/>
            <person name="Brinkwirth N."/>
            <person name="Jami S."/>
            <person name="Bonnafe E."/>
            <person name="Treilhou M."/>
            <person name="Undheim E.A.B."/>
            <person name="Schmidt J.O."/>
            <person name="King G.F."/>
            <person name="Vetter I."/>
        </authorList>
    </citation>
    <scope>NUCLEOTIDE SEQUENCE [MRNA]</scope>
    <scope>FUNCTION</scope>
    <scope>BIOASSAY</scope>
    <scope>TOXIC DOSE</scope>
    <scope>IDENTIFICATION BY MASS SPECTROMETRY</scope>
    <scope>SYNTHESIS OF 57-77</scope>
    <scope>SUBCELLULAR LOCATION</scope>
    <scope>PROBABLE AMIDATION AT LYS-77</scope>
    <source>
        <tissue>Venom</tissue>
        <tissue>Venom gland</tissue>
    </source>
</reference>
<proteinExistence type="evidence at protein level"/>
<dbReference type="EMBL" id="OW518839">
    <property type="protein sequence ID" value="CAH2618699.1"/>
    <property type="molecule type" value="mRNA"/>
</dbReference>
<dbReference type="GO" id="GO:0005576">
    <property type="term" value="C:extracellular region"/>
    <property type="evidence" value="ECO:0007669"/>
    <property type="project" value="UniProtKB-SubCell"/>
</dbReference>
<dbReference type="GO" id="GO:0090729">
    <property type="term" value="F:toxin activity"/>
    <property type="evidence" value="ECO:0007669"/>
    <property type="project" value="UniProtKB-KW"/>
</dbReference>
<dbReference type="InterPro" id="IPR049518">
    <property type="entry name" value="Pilosulin"/>
</dbReference>
<dbReference type="Pfam" id="PF17499">
    <property type="entry name" value="Pilosulin"/>
    <property type="match status" value="1"/>
</dbReference>
<feature type="signal peptide" evidence="2">
    <location>
        <begin position="1"/>
        <end position="26"/>
    </location>
</feature>
<feature type="propeptide" id="PRO_0000459144" evidence="6">
    <location>
        <begin position="27"/>
        <end position="56"/>
    </location>
</feature>
<feature type="peptide" id="PRO_0000459145" description="Myrmicitoxin-Ta2a" evidence="6">
    <location>
        <begin position="57"/>
        <end position="77"/>
    </location>
</feature>
<feature type="modified residue" description="Lysine amide" evidence="6">
    <location>
        <position position="77"/>
    </location>
</feature>
<protein>
    <recommendedName>
        <fullName evidence="6">Myrmicitoxin-Ta2a</fullName>
        <shortName evidence="6">MYRTX-Ta2a</shortName>
        <shortName evidence="4">Ta2a</shortName>
    </recommendedName>
    <alternativeName>
        <fullName evidence="7">M_MYRTX_Ta1a</fullName>
    </alternativeName>
</protein>